<dbReference type="EC" id="4.2.1.9" evidence="1"/>
<dbReference type="EMBL" id="CP001197">
    <property type="protein sequence ID" value="ACL08977.1"/>
    <property type="molecule type" value="Genomic_DNA"/>
</dbReference>
<dbReference type="SMR" id="B8DMM1"/>
<dbReference type="STRING" id="883.DvMF_2034"/>
<dbReference type="KEGG" id="dvm:DvMF_2034"/>
<dbReference type="eggNOG" id="COG0129">
    <property type="taxonomic scope" value="Bacteria"/>
</dbReference>
<dbReference type="HOGENOM" id="CLU_014271_4_2_7"/>
<dbReference type="OrthoDB" id="9807077at2"/>
<dbReference type="UniPathway" id="UPA00047">
    <property type="reaction ID" value="UER00057"/>
</dbReference>
<dbReference type="UniPathway" id="UPA00049">
    <property type="reaction ID" value="UER00061"/>
</dbReference>
<dbReference type="GO" id="GO:0005829">
    <property type="term" value="C:cytosol"/>
    <property type="evidence" value="ECO:0007669"/>
    <property type="project" value="TreeGrafter"/>
</dbReference>
<dbReference type="GO" id="GO:0051537">
    <property type="term" value="F:2 iron, 2 sulfur cluster binding"/>
    <property type="evidence" value="ECO:0007669"/>
    <property type="project" value="UniProtKB-UniRule"/>
</dbReference>
<dbReference type="GO" id="GO:0004160">
    <property type="term" value="F:dihydroxy-acid dehydratase activity"/>
    <property type="evidence" value="ECO:0007669"/>
    <property type="project" value="UniProtKB-UniRule"/>
</dbReference>
<dbReference type="GO" id="GO:0000287">
    <property type="term" value="F:magnesium ion binding"/>
    <property type="evidence" value="ECO:0007669"/>
    <property type="project" value="UniProtKB-UniRule"/>
</dbReference>
<dbReference type="GO" id="GO:0009097">
    <property type="term" value="P:isoleucine biosynthetic process"/>
    <property type="evidence" value="ECO:0007669"/>
    <property type="project" value="UniProtKB-UniRule"/>
</dbReference>
<dbReference type="GO" id="GO:0009099">
    <property type="term" value="P:L-valine biosynthetic process"/>
    <property type="evidence" value="ECO:0007669"/>
    <property type="project" value="UniProtKB-UniRule"/>
</dbReference>
<dbReference type="FunFam" id="3.50.30.80:FF:000001">
    <property type="entry name" value="Dihydroxy-acid dehydratase"/>
    <property type="match status" value="1"/>
</dbReference>
<dbReference type="Gene3D" id="3.50.30.80">
    <property type="entry name" value="IlvD/EDD C-terminal domain-like"/>
    <property type="match status" value="1"/>
</dbReference>
<dbReference type="HAMAP" id="MF_00012">
    <property type="entry name" value="IlvD"/>
    <property type="match status" value="1"/>
</dbReference>
<dbReference type="InterPro" id="IPR042096">
    <property type="entry name" value="Dihydro-acid_dehy_C"/>
</dbReference>
<dbReference type="InterPro" id="IPR004404">
    <property type="entry name" value="DihydroxyA_deHydtase"/>
</dbReference>
<dbReference type="InterPro" id="IPR020558">
    <property type="entry name" value="DiOHA_6PGluconate_deHydtase_CS"/>
</dbReference>
<dbReference type="InterPro" id="IPR056740">
    <property type="entry name" value="ILV_EDD_C"/>
</dbReference>
<dbReference type="InterPro" id="IPR000581">
    <property type="entry name" value="ILV_EDD_N"/>
</dbReference>
<dbReference type="InterPro" id="IPR037237">
    <property type="entry name" value="IlvD/EDD_N"/>
</dbReference>
<dbReference type="NCBIfam" id="TIGR00110">
    <property type="entry name" value="ilvD"/>
    <property type="match status" value="1"/>
</dbReference>
<dbReference type="NCBIfam" id="NF002068">
    <property type="entry name" value="PRK00911.1"/>
    <property type="match status" value="1"/>
</dbReference>
<dbReference type="PANTHER" id="PTHR43661">
    <property type="entry name" value="D-XYLONATE DEHYDRATASE"/>
    <property type="match status" value="1"/>
</dbReference>
<dbReference type="PANTHER" id="PTHR43661:SF3">
    <property type="entry name" value="D-XYLONATE DEHYDRATASE YAGF-RELATED"/>
    <property type="match status" value="1"/>
</dbReference>
<dbReference type="Pfam" id="PF24877">
    <property type="entry name" value="ILV_EDD_C"/>
    <property type="match status" value="1"/>
</dbReference>
<dbReference type="Pfam" id="PF00920">
    <property type="entry name" value="ILVD_EDD_N"/>
    <property type="match status" value="1"/>
</dbReference>
<dbReference type="SUPFAM" id="SSF143975">
    <property type="entry name" value="IlvD/EDD N-terminal domain-like"/>
    <property type="match status" value="1"/>
</dbReference>
<dbReference type="SUPFAM" id="SSF52016">
    <property type="entry name" value="LeuD/IlvD-like"/>
    <property type="match status" value="1"/>
</dbReference>
<dbReference type="PROSITE" id="PS00886">
    <property type="entry name" value="ILVD_EDD_1"/>
    <property type="match status" value="1"/>
</dbReference>
<dbReference type="PROSITE" id="PS00887">
    <property type="entry name" value="ILVD_EDD_2"/>
    <property type="match status" value="1"/>
</dbReference>
<comment type="function">
    <text evidence="1">Functions in the biosynthesis of branched-chain amino acids. Catalyzes the dehydration of (2R,3R)-2,3-dihydroxy-3-methylpentanoate (2,3-dihydroxy-3-methylvalerate) into 2-oxo-3-methylpentanoate (2-oxo-3-methylvalerate) and of (2R)-2,3-dihydroxy-3-methylbutanoate (2,3-dihydroxyisovalerate) into 2-oxo-3-methylbutanoate (2-oxoisovalerate), the penultimate precursor to L-isoleucine and L-valine, respectively.</text>
</comment>
<comment type="catalytic activity">
    <reaction evidence="1">
        <text>(2R)-2,3-dihydroxy-3-methylbutanoate = 3-methyl-2-oxobutanoate + H2O</text>
        <dbReference type="Rhea" id="RHEA:24809"/>
        <dbReference type="ChEBI" id="CHEBI:11851"/>
        <dbReference type="ChEBI" id="CHEBI:15377"/>
        <dbReference type="ChEBI" id="CHEBI:49072"/>
        <dbReference type="EC" id="4.2.1.9"/>
    </reaction>
    <physiologicalReaction direction="left-to-right" evidence="1">
        <dbReference type="Rhea" id="RHEA:24810"/>
    </physiologicalReaction>
</comment>
<comment type="catalytic activity">
    <reaction evidence="1">
        <text>(2R,3R)-2,3-dihydroxy-3-methylpentanoate = (S)-3-methyl-2-oxopentanoate + H2O</text>
        <dbReference type="Rhea" id="RHEA:27694"/>
        <dbReference type="ChEBI" id="CHEBI:15377"/>
        <dbReference type="ChEBI" id="CHEBI:35146"/>
        <dbReference type="ChEBI" id="CHEBI:49258"/>
        <dbReference type="EC" id="4.2.1.9"/>
    </reaction>
    <physiologicalReaction direction="left-to-right" evidence="1">
        <dbReference type="Rhea" id="RHEA:27695"/>
    </physiologicalReaction>
</comment>
<comment type="cofactor">
    <cofactor evidence="1">
        <name>[2Fe-2S] cluster</name>
        <dbReference type="ChEBI" id="CHEBI:190135"/>
    </cofactor>
    <text evidence="1">Binds 1 [2Fe-2S] cluster per subunit. This cluster acts as a Lewis acid cofactor.</text>
</comment>
<comment type="cofactor">
    <cofactor evidence="1">
        <name>Mg(2+)</name>
        <dbReference type="ChEBI" id="CHEBI:18420"/>
    </cofactor>
</comment>
<comment type="pathway">
    <text evidence="1">Amino-acid biosynthesis; L-isoleucine biosynthesis; L-isoleucine from 2-oxobutanoate: step 3/4.</text>
</comment>
<comment type="pathway">
    <text evidence="1">Amino-acid biosynthesis; L-valine biosynthesis; L-valine from pyruvate: step 3/4.</text>
</comment>
<comment type="subunit">
    <text evidence="1">Homodimer.</text>
</comment>
<comment type="similarity">
    <text evidence="1">Belongs to the IlvD/Edd family.</text>
</comment>
<sequence length="555" mass="58070">MRSKKMTHGLEKAPHRSLLHALGLTREEIERPLVGVVNAANEVVPGHVHLHTIAEAVKAGVRAAGGTPMEFPAIAVCDGLAMNHEGMHFSLPSREIIADSIEIMATAHPFDALVFIPNCDKSVPGMLMAMLRMDIPSIMVSGGPMLAGGTLAGRTDLISVFEAVGRVQRGDMTMAELDEMTETACPGCGSCAGMFTANTMNCMAETMGLALPGNGTIPAVTAARVRLAKHAGMKVMELLEKNITPRSIVTPRAVANAVAVDMALGGSTNTVLHLPAVFGEAGLDLTLDIFDEVSRKTPNLCKLSPAGHHHIQDLHAAGGIPAVMAELTRKGLVDTSVMTVTGKTLAENLAELNARVLNPDVIRSADAPYSAQGGIAILKGSLAPQGAVVKQSAVAPEMMVREAVARVFDSEGEAHAAIMGGKINKGDAIIIRYEGPRGGPGMREMLSPTAAIAGMGLGADVALITDGRFSGGTRGAAIGHVSPEAADGGNIGLVREGDHILIDIPARRLDLLVDEAELAARRETFVPLEKPVTSPLLRRYARQVTSAATGAMYRK</sequence>
<accession>B8DMM1</accession>
<keyword id="KW-0001">2Fe-2S</keyword>
<keyword id="KW-0028">Amino-acid biosynthesis</keyword>
<keyword id="KW-0100">Branched-chain amino acid biosynthesis</keyword>
<keyword id="KW-0408">Iron</keyword>
<keyword id="KW-0411">Iron-sulfur</keyword>
<keyword id="KW-0456">Lyase</keyword>
<keyword id="KW-0460">Magnesium</keyword>
<keyword id="KW-0479">Metal-binding</keyword>
<reference key="1">
    <citation type="submission" date="2008-10" db="EMBL/GenBank/DDBJ databases">
        <title>Complete sequence of Desulfovibrio vulgaris str. 'Miyazaki F'.</title>
        <authorList>
            <person name="Lucas S."/>
            <person name="Copeland A."/>
            <person name="Lapidus A."/>
            <person name="Glavina del Rio T."/>
            <person name="Dalin E."/>
            <person name="Tice H."/>
            <person name="Bruce D."/>
            <person name="Goodwin L."/>
            <person name="Pitluck S."/>
            <person name="Sims D."/>
            <person name="Brettin T."/>
            <person name="Detter J.C."/>
            <person name="Han C."/>
            <person name="Larimer F."/>
            <person name="Land M."/>
            <person name="Hauser L."/>
            <person name="Kyrpides N."/>
            <person name="Mikhailova N."/>
            <person name="Hazen T.C."/>
            <person name="Richardson P."/>
        </authorList>
    </citation>
    <scope>NUCLEOTIDE SEQUENCE [LARGE SCALE GENOMIC DNA]</scope>
    <source>
        <strain>DSM 19637 / Miyazaki F</strain>
    </source>
</reference>
<protein>
    <recommendedName>
        <fullName evidence="1">Dihydroxy-acid dehydratase</fullName>
        <shortName evidence="1">DAD</shortName>
        <ecNumber evidence="1">4.2.1.9</ecNumber>
    </recommendedName>
</protein>
<feature type="chain" id="PRO_1000116268" description="Dihydroxy-acid dehydratase">
    <location>
        <begin position="1"/>
        <end position="555"/>
    </location>
</feature>
<feature type="active site" description="Proton acceptor" evidence="1">
    <location>
        <position position="470"/>
    </location>
</feature>
<feature type="binding site" evidence="1">
    <location>
        <position position="78"/>
    </location>
    <ligand>
        <name>Mg(2+)</name>
        <dbReference type="ChEBI" id="CHEBI:18420"/>
    </ligand>
</feature>
<feature type="binding site" evidence="1">
    <location>
        <position position="119"/>
    </location>
    <ligand>
        <name>[2Fe-2S] cluster</name>
        <dbReference type="ChEBI" id="CHEBI:190135"/>
    </ligand>
</feature>
<feature type="binding site" evidence="1">
    <location>
        <position position="120"/>
    </location>
    <ligand>
        <name>Mg(2+)</name>
        <dbReference type="ChEBI" id="CHEBI:18420"/>
    </ligand>
</feature>
<feature type="binding site" description="via carbamate group" evidence="1">
    <location>
        <position position="121"/>
    </location>
    <ligand>
        <name>Mg(2+)</name>
        <dbReference type="ChEBI" id="CHEBI:18420"/>
    </ligand>
</feature>
<feature type="binding site" evidence="1">
    <location>
        <position position="191"/>
    </location>
    <ligand>
        <name>[2Fe-2S] cluster</name>
        <dbReference type="ChEBI" id="CHEBI:190135"/>
    </ligand>
</feature>
<feature type="binding site" evidence="1">
    <location>
        <position position="444"/>
    </location>
    <ligand>
        <name>Mg(2+)</name>
        <dbReference type="ChEBI" id="CHEBI:18420"/>
    </ligand>
</feature>
<feature type="modified residue" description="N6-carboxylysine" evidence="1">
    <location>
        <position position="121"/>
    </location>
</feature>
<evidence type="ECO:0000255" key="1">
    <source>
        <dbReference type="HAMAP-Rule" id="MF_00012"/>
    </source>
</evidence>
<gene>
    <name evidence="1" type="primary">ilvD</name>
    <name type="ordered locus">DvMF_2034</name>
</gene>
<name>ILVD_NITV9</name>
<organism>
    <name type="scientific">Nitratidesulfovibrio vulgaris (strain DSM 19637 / Miyazaki F)</name>
    <name type="common">Desulfovibrio vulgaris</name>
    <dbReference type="NCBI Taxonomy" id="883"/>
    <lineage>
        <taxon>Bacteria</taxon>
        <taxon>Pseudomonadati</taxon>
        <taxon>Thermodesulfobacteriota</taxon>
        <taxon>Desulfovibrionia</taxon>
        <taxon>Desulfovibrionales</taxon>
        <taxon>Desulfovibrionaceae</taxon>
        <taxon>Nitratidesulfovibrio</taxon>
    </lineage>
</organism>
<proteinExistence type="inferred from homology"/>